<gene>
    <name type="primary">TEAD4</name>
    <name type="synonym">TEF-1</name>
    <name type="synonym">TEF3</name>
</gene>
<comment type="function">
    <text evidence="1">Transcription factor which plays a key role in the Hippo signaling pathway, a pathway involved in organ size control and tumor suppression by restricting proliferation and promoting apoptosis. The core of this pathway is composed of a kinase cascade wherein MST1/MST2, in complex with its regulatory protein SAV1, phosphorylates and activates LATS1/2 in complex with its regulatory protein MOB1, which in turn phosphorylates and inactivates YAP1 oncoprotein and WWTR1/TAZ (By similarity). Binds m-cat elements from muscle-specific promoters and differentially activate transcription.</text>
</comment>
<comment type="function">
    <text>Isoform B has probably a transactivation capacity that is lacking in the other isoforms. Isoform D may be defective in DNA binding.</text>
</comment>
<comment type="subcellular location">
    <subcellularLocation>
        <location>Nucleus</location>
    </subcellularLocation>
</comment>
<comment type="alternative products">
    <event type="alternative splicing"/>
    <isoform>
        <id>P48984-1</id>
        <name>B</name>
        <sequence type="displayed"/>
    </isoform>
    <isoform>
        <id>P48984-2</id>
        <name>A</name>
        <sequence type="described" ref="VSP_006391"/>
    </isoform>
    <isoform>
        <id>P48984-3</id>
        <name>C</name>
        <sequence type="described" ref="VSP_006391 VSP_006392"/>
    </isoform>
    <isoform>
        <id>P48984-4</id>
        <name>D</name>
        <sequence type="described" ref="VSP_006393"/>
    </isoform>
</comment>
<comment type="tissue specificity">
    <text>Enriched in cardiac and skeletal muscle.</text>
</comment>
<comment type="caution">
    <text evidence="6">Was originally called TEF-1, but is the ortholog of mammalian TEF-3.</text>
</comment>
<proteinExistence type="evidence at transcript level"/>
<evidence type="ECO:0000250" key="1"/>
<evidence type="ECO:0000255" key="2">
    <source>
        <dbReference type="PROSITE-ProRule" id="PRU00505"/>
    </source>
</evidence>
<evidence type="ECO:0000256" key="3">
    <source>
        <dbReference type="SAM" id="MobiDB-lite"/>
    </source>
</evidence>
<evidence type="ECO:0000303" key="4">
    <source>
    </source>
</evidence>
<evidence type="ECO:0000305" key="5"/>
<evidence type="ECO:0000305" key="6">
    <source>
    </source>
</evidence>
<name>TEAD4_CHICK</name>
<organism>
    <name type="scientific">Gallus gallus</name>
    <name type="common">Chicken</name>
    <dbReference type="NCBI Taxonomy" id="9031"/>
    <lineage>
        <taxon>Eukaryota</taxon>
        <taxon>Metazoa</taxon>
        <taxon>Chordata</taxon>
        <taxon>Craniata</taxon>
        <taxon>Vertebrata</taxon>
        <taxon>Euteleostomi</taxon>
        <taxon>Archelosauria</taxon>
        <taxon>Archosauria</taxon>
        <taxon>Dinosauria</taxon>
        <taxon>Saurischia</taxon>
        <taxon>Theropoda</taxon>
        <taxon>Coelurosauria</taxon>
        <taxon>Aves</taxon>
        <taxon>Neognathae</taxon>
        <taxon>Galloanserae</taxon>
        <taxon>Galliformes</taxon>
        <taxon>Phasianidae</taxon>
        <taxon>Phasianinae</taxon>
        <taxon>Gallus</taxon>
    </lineage>
</organism>
<reference key="1">
    <citation type="journal article" date="1994" name="J. Biol. Chem.">
        <title>Muscle-enriched TEF-1 isoforms bind M-CAT elements from muscle-specific promoters and differentially activate transcription.</title>
        <authorList>
            <person name="Stewart A.F.R."/>
            <person name="Larkin S.B."/>
            <person name="Farrance I.K.G."/>
            <person name="Mar J.H."/>
            <person name="Hall D.E."/>
            <person name="Ordahl C.P."/>
        </authorList>
    </citation>
    <scope>NUCLEOTIDE SEQUENCE [MRNA] (ISOFORMS A; B; C AND D)</scope>
    <source>
        <tissue>Heart</tissue>
    </source>
</reference>
<feature type="chain" id="PRO_0000205939" description="Transcriptional enhancer factor TEF-3">
    <location>
        <begin position="1"/>
        <end position="438"/>
    </location>
</feature>
<feature type="DNA-binding region" description="TEA" evidence="2">
    <location>
        <begin position="28"/>
        <end position="104"/>
    </location>
</feature>
<feature type="region of interest" description="Disordered" evidence="3">
    <location>
        <begin position="1"/>
        <end position="36"/>
    </location>
</feature>
<feature type="region of interest" description="Disordered" evidence="3">
    <location>
        <begin position="195"/>
        <end position="217"/>
    </location>
</feature>
<feature type="compositionally biased region" description="Polar residues" evidence="3">
    <location>
        <begin position="1"/>
        <end position="18"/>
    </location>
</feature>
<feature type="compositionally biased region" description="Low complexity" evidence="3">
    <location>
        <begin position="205"/>
        <end position="216"/>
    </location>
</feature>
<feature type="splice variant" id="VSP_006393" description="In isoform D." evidence="4">
    <location>
        <begin position="1"/>
        <end position="131"/>
    </location>
</feature>
<feature type="splice variant" id="VSP_006391" description="In isoform A and isoform C." evidence="4">
    <location>
        <begin position="111"/>
        <end position="123"/>
    </location>
</feature>
<feature type="splice variant" id="VSP_006392" description="In isoform C." evidence="4">
    <original>P</original>
    <variation>PVCL</variation>
    <location>
        <position position="201"/>
    </location>
</feature>
<feature type="sequence conflict" description="In Ref. 1; AAC59646." evidence="5" ref="1">
    <original>M</original>
    <variation>LELLAGTI</variation>
    <location>
        <position position="1"/>
    </location>
</feature>
<dbReference type="EMBL" id="U04834">
    <property type="protein sequence ID" value="AAC59646.2"/>
    <property type="molecule type" value="mRNA"/>
</dbReference>
<dbReference type="EMBL" id="U06848">
    <property type="status" value="NOT_ANNOTATED_CDS"/>
    <property type="molecule type" value="mRNA"/>
</dbReference>
<dbReference type="EMBL" id="U06849">
    <property type="status" value="NOT_ANNOTATED_CDS"/>
    <property type="molecule type" value="mRNA"/>
</dbReference>
<dbReference type="EMBL" id="U06850">
    <property type="status" value="NOT_ANNOTATED_CDS"/>
    <property type="molecule type" value="mRNA"/>
</dbReference>
<dbReference type="EMBL" id="U06851">
    <property type="status" value="NOT_ANNOTATED_CDS"/>
    <property type="molecule type" value="mRNA"/>
</dbReference>
<dbReference type="PIR" id="A53042">
    <property type="entry name" value="A53042"/>
</dbReference>
<dbReference type="PIR" id="B53042">
    <property type="entry name" value="B53042"/>
</dbReference>
<dbReference type="PIR" id="C53042">
    <property type="entry name" value="C53042"/>
</dbReference>
<dbReference type="RefSeq" id="NP_001001337.1">
    <property type="nucleotide sequence ID" value="NM_001001337.1"/>
</dbReference>
<dbReference type="RefSeq" id="NP_001001340.1">
    <molecule id="P48984-4"/>
    <property type="nucleotide sequence ID" value="NM_001001340.2"/>
</dbReference>
<dbReference type="RefSeq" id="NP_001001341.1">
    <property type="nucleotide sequence ID" value="NM_001001341.1"/>
</dbReference>
<dbReference type="RefSeq" id="NP_990102.1">
    <property type="nucleotide sequence ID" value="NM_204771.1"/>
</dbReference>
<dbReference type="SMR" id="P48984"/>
<dbReference type="FunCoup" id="P48984">
    <property type="interactions" value="907"/>
</dbReference>
<dbReference type="STRING" id="9031.ENSGALP00000023126"/>
<dbReference type="GlyGen" id="P48984">
    <property type="glycosylation" value="1 site"/>
</dbReference>
<dbReference type="PaxDb" id="9031-ENSGALP00000029867"/>
<dbReference type="GeneID" id="395542"/>
<dbReference type="KEGG" id="gga:395542"/>
<dbReference type="CTD" id="7004"/>
<dbReference type="VEuPathDB" id="HostDB:geneid_395542"/>
<dbReference type="eggNOG" id="KOG3841">
    <property type="taxonomic scope" value="Eukaryota"/>
</dbReference>
<dbReference type="InParanoid" id="P48984"/>
<dbReference type="OrthoDB" id="10006572at2759"/>
<dbReference type="PhylomeDB" id="P48984"/>
<dbReference type="Reactome" id="R-GGA-2032785">
    <property type="pathway name" value="YAP1- and WWTR1 (TAZ)-stimulated gene expression"/>
</dbReference>
<dbReference type="Reactome" id="R-GGA-8951671">
    <property type="pathway name" value="RUNX3 regulates YAP1-mediated transcription"/>
</dbReference>
<dbReference type="PRO" id="PR:P48984"/>
<dbReference type="Proteomes" id="UP000000539">
    <property type="component" value="Chromosome 1"/>
</dbReference>
<dbReference type="Bgee" id="ENSGALG00000014342">
    <property type="expression patterns" value="Expressed in skeletal muscle tissue and 11 other cell types or tissues"/>
</dbReference>
<dbReference type="GO" id="GO:0005634">
    <property type="term" value="C:nucleus"/>
    <property type="evidence" value="ECO:0007669"/>
    <property type="project" value="UniProtKB-SubCell"/>
</dbReference>
<dbReference type="GO" id="GO:0005667">
    <property type="term" value="C:transcription regulator complex"/>
    <property type="evidence" value="ECO:0000318"/>
    <property type="project" value="GO_Central"/>
</dbReference>
<dbReference type="GO" id="GO:0000981">
    <property type="term" value="F:DNA-binding transcription factor activity, RNA polymerase II-specific"/>
    <property type="evidence" value="ECO:0000318"/>
    <property type="project" value="GO_Central"/>
</dbReference>
<dbReference type="GO" id="GO:0000978">
    <property type="term" value="F:RNA polymerase II cis-regulatory region sequence-specific DNA binding"/>
    <property type="evidence" value="ECO:0000318"/>
    <property type="project" value="GO_Central"/>
</dbReference>
<dbReference type="GO" id="GO:0006351">
    <property type="term" value="P:DNA-templated transcription"/>
    <property type="evidence" value="ECO:0007669"/>
    <property type="project" value="InterPro"/>
</dbReference>
<dbReference type="GO" id="GO:0048568">
    <property type="term" value="P:embryonic organ development"/>
    <property type="evidence" value="ECO:0000318"/>
    <property type="project" value="GO_Central"/>
</dbReference>
<dbReference type="GO" id="GO:0035329">
    <property type="term" value="P:hippo signaling"/>
    <property type="evidence" value="ECO:0000318"/>
    <property type="project" value="GO_Central"/>
</dbReference>
<dbReference type="GO" id="GO:0006357">
    <property type="term" value="P:regulation of transcription by RNA polymerase II"/>
    <property type="evidence" value="ECO:0000318"/>
    <property type="project" value="GO_Central"/>
</dbReference>
<dbReference type="FunFam" id="2.70.50.80:FF:000001">
    <property type="entry name" value="Transcriptional enhancer factor TEF-1, putative"/>
    <property type="match status" value="1"/>
</dbReference>
<dbReference type="Gene3D" id="2.70.50.80">
    <property type="match status" value="1"/>
</dbReference>
<dbReference type="Gene3D" id="6.10.20.40">
    <property type="entry name" value="TEA/ATTS domain"/>
    <property type="match status" value="1"/>
</dbReference>
<dbReference type="InterPro" id="IPR000818">
    <property type="entry name" value="TEA/ATTS_dom"/>
</dbReference>
<dbReference type="InterPro" id="IPR038096">
    <property type="entry name" value="TEA/ATTS_sf"/>
</dbReference>
<dbReference type="InterPro" id="IPR050937">
    <property type="entry name" value="TEC1_TEAD_TF"/>
</dbReference>
<dbReference type="InterPro" id="IPR027255">
    <property type="entry name" value="TEF-3"/>
</dbReference>
<dbReference type="InterPro" id="IPR016361">
    <property type="entry name" value="TEF_metazoa"/>
</dbReference>
<dbReference type="InterPro" id="IPR041086">
    <property type="entry name" value="YBD"/>
</dbReference>
<dbReference type="PANTHER" id="PTHR11834">
    <property type="entry name" value="TRANSCRIPTIONAL ENHANCER FACTOR TEF RELATED"/>
    <property type="match status" value="1"/>
</dbReference>
<dbReference type="PANTHER" id="PTHR11834:SF2">
    <property type="entry name" value="TRANSCRIPTIONAL ENHANCER FACTOR TEF-3"/>
    <property type="match status" value="1"/>
</dbReference>
<dbReference type="Pfam" id="PF01285">
    <property type="entry name" value="TEA"/>
    <property type="match status" value="1"/>
</dbReference>
<dbReference type="Pfam" id="PF17725">
    <property type="entry name" value="YBD"/>
    <property type="match status" value="1"/>
</dbReference>
<dbReference type="PIRSF" id="PIRSF002603">
    <property type="entry name" value="TEF"/>
    <property type="match status" value="1"/>
</dbReference>
<dbReference type="PIRSF" id="PIRSF500722">
    <property type="entry name" value="TEF-3"/>
    <property type="match status" value="1"/>
</dbReference>
<dbReference type="PRINTS" id="PR00065">
    <property type="entry name" value="TEADOMAIN"/>
</dbReference>
<dbReference type="SMART" id="SM00426">
    <property type="entry name" value="TEA"/>
    <property type="match status" value="1"/>
</dbReference>
<dbReference type="PROSITE" id="PS00554">
    <property type="entry name" value="TEA_1"/>
    <property type="match status" value="1"/>
</dbReference>
<dbReference type="PROSITE" id="PS51088">
    <property type="entry name" value="TEA_2"/>
    <property type="match status" value="1"/>
</dbReference>
<accession>P48984</accession>
<sequence>MTSEWSSPASPEGSNDSGGSEALDKPIDNDAEGVWSPDIEQSFQEALAIYPPCGRRKIILSDEGKMYGRNELIARYIKLRTGKTRTRKQVSSHIQVLARRKAREIQAKLKKTQVDKYDFSSEKDQTAKDKAMQSIATMSSAQIISATAFHSKMALPGLPRSAYPAVSGFWQGALPGQAGSSQDVKPFTQQPYALQPSLPLPGFDSPTGLPPSSSTPAWQGRRVASSKLWMLEFSAFLEQQQDQDTYNKHLFVHIGQSNPSYSDPYLEAVDIRQIYDKFPEKKGGLKELFERGPANAFFLVKFWADLNTNIEDESRSFYGVSSQYESPENMVITCSTKVCSFGKQVVEKVETEYAHYENGHYAYRIHRSPLCEYMINFIHKLKHLPEKYMMNSVLENFTILQVVTNRDTQETLLCIAYVFEVSASDHGAQHHIYRLVKD</sequence>
<protein>
    <recommendedName>
        <fullName>Transcriptional enhancer factor TEF-3</fullName>
    </recommendedName>
    <alternativeName>
        <fullName>M-CAT-binding factor</fullName>
    </alternativeName>
    <alternativeName>
        <fullName>RTEF-1</fullName>
    </alternativeName>
    <alternativeName>
        <fullName>TEA domain family member 4</fullName>
        <shortName>TEAD-4</shortName>
    </alternativeName>
    <alternativeName>
        <fullName>TEF-1</fullName>
    </alternativeName>
</protein>
<keyword id="KW-0010">Activator</keyword>
<keyword id="KW-0025">Alternative splicing</keyword>
<keyword id="KW-0238">DNA-binding</keyword>
<keyword id="KW-0539">Nucleus</keyword>
<keyword id="KW-1185">Reference proteome</keyword>
<keyword id="KW-0804">Transcription</keyword>
<keyword id="KW-0805">Transcription regulation</keyword>